<keyword id="KW-0012">Acyltransferase</keyword>
<keyword id="KW-0133">Cell shape</keyword>
<keyword id="KW-0961">Cell wall biogenesis/degradation</keyword>
<keyword id="KW-0963">Cytoplasm</keyword>
<keyword id="KW-0460">Magnesium</keyword>
<keyword id="KW-0479">Metal-binding</keyword>
<keyword id="KW-0511">Multifunctional enzyme</keyword>
<keyword id="KW-0548">Nucleotidyltransferase</keyword>
<keyword id="KW-0573">Peptidoglycan synthesis</keyword>
<keyword id="KW-0677">Repeat</keyword>
<keyword id="KW-0808">Transferase</keyword>
<dbReference type="EC" id="2.7.7.23" evidence="1"/>
<dbReference type="EC" id="2.3.1.157" evidence="1"/>
<dbReference type="EMBL" id="CU633749">
    <property type="protein sequence ID" value="CAP62877.1"/>
    <property type="molecule type" value="Genomic_DNA"/>
</dbReference>
<dbReference type="RefSeq" id="WP_012351545.1">
    <property type="nucleotide sequence ID" value="NC_010528.1"/>
</dbReference>
<dbReference type="SMR" id="B2AGH8"/>
<dbReference type="GeneID" id="29760625"/>
<dbReference type="KEGG" id="cti:RALTA_A0204"/>
<dbReference type="eggNOG" id="COG1207">
    <property type="taxonomic scope" value="Bacteria"/>
</dbReference>
<dbReference type="HOGENOM" id="CLU_029499_15_2_4"/>
<dbReference type="BioCyc" id="CTAI977880:RALTA_RS01010-MONOMER"/>
<dbReference type="UniPathway" id="UPA00113">
    <property type="reaction ID" value="UER00532"/>
</dbReference>
<dbReference type="UniPathway" id="UPA00113">
    <property type="reaction ID" value="UER00533"/>
</dbReference>
<dbReference type="UniPathway" id="UPA00973"/>
<dbReference type="Proteomes" id="UP000001692">
    <property type="component" value="Chromosome 1"/>
</dbReference>
<dbReference type="GO" id="GO:0005737">
    <property type="term" value="C:cytoplasm"/>
    <property type="evidence" value="ECO:0007669"/>
    <property type="project" value="UniProtKB-SubCell"/>
</dbReference>
<dbReference type="GO" id="GO:0016020">
    <property type="term" value="C:membrane"/>
    <property type="evidence" value="ECO:0007669"/>
    <property type="project" value="GOC"/>
</dbReference>
<dbReference type="GO" id="GO:0019134">
    <property type="term" value="F:glucosamine-1-phosphate N-acetyltransferase activity"/>
    <property type="evidence" value="ECO:0007669"/>
    <property type="project" value="UniProtKB-UniRule"/>
</dbReference>
<dbReference type="GO" id="GO:0000287">
    <property type="term" value="F:magnesium ion binding"/>
    <property type="evidence" value="ECO:0007669"/>
    <property type="project" value="UniProtKB-UniRule"/>
</dbReference>
<dbReference type="GO" id="GO:0003977">
    <property type="term" value="F:UDP-N-acetylglucosamine diphosphorylase activity"/>
    <property type="evidence" value="ECO:0007669"/>
    <property type="project" value="UniProtKB-UniRule"/>
</dbReference>
<dbReference type="GO" id="GO:0000902">
    <property type="term" value="P:cell morphogenesis"/>
    <property type="evidence" value="ECO:0007669"/>
    <property type="project" value="UniProtKB-UniRule"/>
</dbReference>
<dbReference type="GO" id="GO:0071555">
    <property type="term" value="P:cell wall organization"/>
    <property type="evidence" value="ECO:0007669"/>
    <property type="project" value="UniProtKB-KW"/>
</dbReference>
<dbReference type="GO" id="GO:0009245">
    <property type="term" value="P:lipid A biosynthetic process"/>
    <property type="evidence" value="ECO:0007669"/>
    <property type="project" value="UniProtKB-UniRule"/>
</dbReference>
<dbReference type="GO" id="GO:0009252">
    <property type="term" value="P:peptidoglycan biosynthetic process"/>
    <property type="evidence" value="ECO:0007669"/>
    <property type="project" value="UniProtKB-UniRule"/>
</dbReference>
<dbReference type="GO" id="GO:0008360">
    <property type="term" value="P:regulation of cell shape"/>
    <property type="evidence" value="ECO:0007669"/>
    <property type="project" value="UniProtKB-KW"/>
</dbReference>
<dbReference type="GO" id="GO:0006048">
    <property type="term" value="P:UDP-N-acetylglucosamine biosynthetic process"/>
    <property type="evidence" value="ECO:0007669"/>
    <property type="project" value="UniProtKB-UniPathway"/>
</dbReference>
<dbReference type="CDD" id="cd02540">
    <property type="entry name" value="GT2_GlmU_N_bac"/>
    <property type="match status" value="1"/>
</dbReference>
<dbReference type="CDD" id="cd03353">
    <property type="entry name" value="LbH_GlmU_C"/>
    <property type="match status" value="1"/>
</dbReference>
<dbReference type="Gene3D" id="2.160.10.10">
    <property type="entry name" value="Hexapeptide repeat proteins"/>
    <property type="match status" value="1"/>
</dbReference>
<dbReference type="Gene3D" id="3.90.550.10">
    <property type="entry name" value="Spore Coat Polysaccharide Biosynthesis Protein SpsA, Chain A"/>
    <property type="match status" value="1"/>
</dbReference>
<dbReference type="HAMAP" id="MF_01631">
    <property type="entry name" value="GlmU"/>
    <property type="match status" value="1"/>
</dbReference>
<dbReference type="InterPro" id="IPR005882">
    <property type="entry name" value="Bifunctional_GlmU"/>
</dbReference>
<dbReference type="InterPro" id="IPR050065">
    <property type="entry name" value="GlmU-like"/>
</dbReference>
<dbReference type="InterPro" id="IPR038009">
    <property type="entry name" value="GlmU_C_LbH"/>
</dbReference>
<dbReference type="InterPro" id="IPR001451">
    <property type="entry name" value="Hexapep"/>
</dbReference>
<dbReference type="InterPro" id="IPR025877">
    <property type="entry name" value="MobA-like_NTP_Trfase"/>
</dbReference>
<dbReference type="InterPro" id="IPR029044">
    <property type="entry name" value="Nucleotide-diphossugar_trans"/>
</dbReference>
<dbReference type="InterPro" id="IPR011004">
    <property type="entry name" value="Trimer_LpxA-like_sf"/>
</dbReference>
<dbReference type="NCBIfam" id="TIGR01173">
    <property type="entry name" value="glmU"/>
    <property type="match status" value="1"/>
</dbReference>
<dbReference type="PANTHER" id="PTHR43584:SF3">
    <property type="entry name" value="BIFUNCTIONAL PROTEIN GLMU"/>
    <property type="match status" value="1"/>
</dbReference>
<dbReference type="PANTHER" id="PTHR43584">
    <property type="entry name" value="NUCLEOTIDYL TRANSFERASE"/>
    <property type="match status" value="1"/>
</dbReference>
<dbReference type="Pfam" id="PF14602">
    <property type="entry name" value="Hexapep_2"/>
    <property type="match status" value="1"/>
</dbReference>
<dbReference type="Pfam" id="PF12804">
    <property type="entry name" value="NTP_transf_3"/>
    <property type="match status" value="1"/>
</dbReference>
<dbReference type="SUPFAM" id="SSF53448">
    <property type="entry name" value="Nucleotide-diphospho-sugar transferases"/>
    <property type="match status" value="1"/>
</dbReference>
<dbReference type="SUPFAM" id="SSF51161">
    <property type="entry name" value="Trimeric LpxA-like enzymes"/>
    <property type="match status" value="1"/>
</dbReference>
<comment type="function">
    <text evidence="1">Catalyzes the last two sequential reactions in the de novo biosynthetic pathway for UDP-N-acetylglucosamine (UDP-GlcNAc). The C-terminal domain catalyzes the transfer of acetyl group from acetyl coenzyme A to glucosamine-1-phosphate (GlcN-1-P) to produce N-acetylglucosamine-1-phosphate (GlcNAc-1-P), which is converted into UDP-GlcNAc by the transfer of uridine 5-monophosphate (from uridine 5-triphosphate), a reaction catalyzed by the N-terminal domain.</text>
</comment>
<comment type="catalytic activity">
    <reaction evidence="1">
        <text>alpha-D-glucosamine 1-phosphate + acetyl-CoA = N-acetyl-alpha-D-glucosamine 1-phosphate + CoA + H(+)</text>
        <dbReference type="Rhea" id="RHEA:13725"/>
        <dbReference type="ChEBI" id="CHEBI:15378"/>
        <dbReference type="ChEBI" id="CHEBI:57287"/>
        <dbReference type="ChEBI" id="CHEBI:57288"/>
        <dbReference type="ChEBI" id="CHEBI:57776"/>
        <dbReference type="ChEBI" id="CHEBI:58516"/>
        <dbReference type="EC" id="2.3.1.157"/>
    </reaction>
</comment>
<comment type="catalytic activity">
    <reaction evidence="1">
        <text>N-acetyl-alpha-D-glucosamine 1-phosphate + UTP + H(+) = UDP-N-acetyl-alpha-D-glucosamine + diphosphate</text>
        <dbReference type="Rhea" id="RHEA:13509"/>
        <dbReference type="ChEBI" id="CHEBI:15378"/>
        <dbReference type="ChEBI" id="CHEBI:33019"/>
        <dbReference type="ChEBI" id="CHEBI:46398"/>
        <dbReference type="ChEBI" id="CHEBI:57705"/>
        <dbReference type="ChEBI" id="CHEBI:57776"/>
        <dbReference type="EC" id="2.7.7.23"/>
    </reaction>
</comment>
<comment type="cofactor">
    <cofactor evidence="1">
        <name>Mg(2+)</name>
        <dbReference type="ChEBI" id="CHEBI:18420"/>
    </cofactor>
    <text evidence="1">Binds 1 Mg(2+) ion per subunit.</text>
</comment>
<comment type="pathway">
    <text evidence="1">Nucleotide-sugar biosynthesis; UDP-N-acetyl-alpha-D-glucosamine biosynthesis; N-acetyl-alpha-D-glucosamine 1-phosphate from alpha-D-glucosamine 6-phosphate (route II): step 2/2.</text>
</comment>
<comment type="pathway">
    <text evidence="1">Nucleotide-sugar biosynthesis; UDP-N-acetyl-alpha-D-glucosamine biosynthesis; UDP-N-acetyl-alpha-D-glucosamine from N-acetyl-alpha-D-glucosamine 1-phosphate: step 1/1.</text>
</comment>
<comment type="pathway">
    <text evidence="1">Bacterial outer membrane biogenesis; LPS lipid A biosynthesis.</text>
</comment>
<comment type="subunit">
    <text evidence="1">Homotrimer.</text>
</comment>
<comment type="subcellular location">
    <subcellularLocation>
        <location evidence="1">Cytoplasm</location>
    </subcellularLocation>
</comment>
<comment type="similarity">
    <text evidence="1">In the N-terminal section; belongs to the N-acetylglucosamine-1-phosphate uridyltransferase family.</text>
</comment>
<comment type="similarity">
    <text evidence="1">In the C-terminal section; belongs to the transferase hexapeptide repeat family.</text>
</comment>
<sequence length="454" mass="48349">MNIVILAAGMGKRMYSDLPKVLHPVAGRPMLAHVLDTARALSPSRLVVVVGHGAARVREAVAADDVAFAEQAQQLGTGHAVMQALPLLDDNQPTLVLYGDVPLTSAATLQALVAEAGAQRFGVLTVEMPDPTGYGRIVRDAAGSIVRIVEQKDATEAEKAIREINTGIIVCPTGHLRKWLSTLRNDNAQGEYYLTDTVERAVADGVETVSAQPAAVWETLGVNSKLQLAEVERIHQGNQARRLLEAGVTLLDPARIDVRGELTCGRDVTIDVGCVFEGRVHLEDGVRIGAHCVIRNSTVGAGAQVHPFCHIDEAKVGPAGRIGPYARLRPGTELGEDVHIGNFVEVKNAQVAAHSKANHLAYVGDATVGSRVNIGAGTITCNYDGVNKHRTVIEDDVFIGSDTQLVAPVTVRRGATLGAGTTLTKEAPADKLTLSRAKQLTIDAWQRPVKQPKQ</sequence>
<feature type="chain" id="PRO_1000186433" description="Bifunctional protein GlmU">
    <location>
        <begin position="1"/>
        <end position="454"/>
    </location>
</feature>
<feature type="region of interest" description="Pyrophosphorylase" evidence="1">
    <location>
        <begin position="1"/>
        <end position="225"/>
    </location>
</feature>
<feature type="region of interest" description="Linker" evidence="1">
    <location>
        <begin position="226"/>
        <end position="246"/>
    </location>
</feature>
<feature type="region of interest" description="N-acetyltransferase" evidence="1">
    <location>
        <begin position="247"/>
        <end position="454"/>
    </location>
</feature>
<feature type="active site" description="Proton acceptor" evidence="1">
    <location>
        <position position="359"/>
    </location>
</feature>
<feature type="binding site" evidence="1">
    <location>
        <begin position="6"/>
        <end position="9"/>
    </location>
    <ligand>
        <name>UDP-N-acetyl-alpha-D-glucosamine</name>
        <dbReference type="ChEBI" id="CHEBI:57705"/>
    </ligand>
</feature>
<feature type="binding site" evidence="1">
    <location>
        <position position="20"/>
    </location>
    <ligand>
        <name>UDP-N-acetyl-alpha-D-glucosamine</name>
        <dbReference type="ChEBI" id="CHEBI:57705"/>
    </ligand>
</feature>
<feature type="binding site" evidence="1">
    <location>
        <position position="71"/>
    </location>
    <ligand>
        <name>UDP-N-acetyl-alpha-D-glucosamine</name>
        <dbReference type="ChEBI" id="CHEBI:57705"/>
    </ligand>
</feature>
<feature type="binding site" evidence="1">
    <location>
        <begin position="76"/>
        <end position="77"/>
    </location>
    <ligand>
        <name>UDP-N-acetyl-alpha-D-glucosamine</name>
        <dbReference type="ChEBI" id="CHEBI:57705"/>
    </ligand>
</feature>
<feature type="binding site" evidence="1">
    <location>
        <begin position="98"/>
        <end position="100"/>
    </location>
    <ligand>
        <name>UDP-N-acetyl-alpha-D-glucosamine</name>
        <dbReference type="ChEBI" id="CHEBI:57705"/>
    </ligand>
</feature>
<feature type="binding site" evidence="1">
    <location>
        <position position="100"/>
    </location>
    <ligand>
        <name>Mg(2+)</name>
        <dbReference type="ChEBI" id="CHEBI:18420"/>
    </ligand>
</feature>
<feature type="binding site" evidence="1">
    <location>
        <position position="135"/>
    </location>
    <ligand>
        <name>UDP-N-acetyl-alpha-D-glucosamine</name>
        <dbReference type="ChEBI" id="CHEBI:57705"/>
    </ligand>
</feature>
<feature type="binding site" evidence="1">
    <location>
        <position position="150"/>
    </location>
    <ligand>
        <name>UDP-N-acetyl-alpha-D-glucosamine</name>
        <dbReference type="ChEBI" id="CHEBI:57705"/>
    </ligand>
</feature>
<feature type="binding site" evidence="1">
    <location>
        <position position="165"/>
    </location>
    <ligand>
        <name>UDP-N-acetyl-alpha-D-glucosamine</name>
        <dbReference type="ChEBI" id="CHEBI:57705"/>
    </ligand>
</feature>
<feature type="binding site" evidence="1">
    <location>
        <position position="223"/>
    </location>
    <ligand>
        <name>Mg(2+)</name>
        <dbReference type="ChEBI" id="CHEBI:18420"/>
    </ligand>
</feature>
<feature type="binding site" evidence="1">
    <location>
        <position position="223"/>
    </location>
    <ligand>
        <name>UDP-N-acetyl-alpha-D-glucosamine</name>
        <dbReference type="ChEBI" id="CHEBI:57705"/>
    </ligand>
</feature>
<feature type="binding site" evidence="1">
    <location>
        <position position="329"/>
    </location>
    <ligand>
        <name>UDP-N-acetyl-alpha-D-glucosamine</name>
        <dbReference type="ChEBI" id="CHEBI:57705"/>
    </ligand>
</feature>
<feature type="binding site" evidence="1">
    <location>
        <position position="347"/>
    </location>
    <ligand>
        <name>UDP-N-acetyl-alpha-D-glucosamine</name>
        <dbReference type="ChEBI" id="CHEBI:57705"/>
    </ligand>
</feature>
<feature type="binding site" evidence="1">
    <location>
        <position position="362"/>
    </location>
    <ligand>
        <name>UDP-N-acetyl-alpha-D-glucosamine</name>
        <dbReference type="ChEBI" id="CHEBI:57705"/>
    </ligand>
</feature>
<feature type="binding site" evidence="1">
    <location>
        <position position="373"/>
    </location>
    <ligand>
        <name>UDP-N-acetyl-alpha-D-glucosamine</name>
        <dbReference type="ChEBI" id="CHEBI:57705"/>
    </ligand>
</feature>
<feature type="binding site" evidence="1">
    <location>
        <position position="376"/>
    </location>
    <ligand>
        <name>acetyl-CoA</name>
        <dbReference type="ChEBI" id="CHEBI:57288"/>
    </ligand>
</feature>
<feature type="binding site" evidence="1">
    <location>
        <begin position="382"/>
        <end position="383"/>
    </location>
    <ligand>
        <name>acetyl-CoA</name>
        <dbReference type="ChEBI" id="CHEBI:57288"/>
    </ligand>
</feature>
<feature type="binding site" evidence="1">
    <location>
        <position position="401"/>
    </location>
    <ligand>
        <name>acetyl-CoA</name>
        <dbReference type="ChEBI" id="CHEBI:57288"/>
    </ligand>
</feature>
<feature type="binding site" evidence="1">
    <location>
        <position position="419"/>
    </location>
    <ligand>
        <name>acetyl-CoA</name>
        <dbReference type="ChEBI" id="CHEBI:57288"/>
    </ligand>
</feature>
<feature type="binding site" evidence="1">
    <location>
        <position position="436"/>
    </location>
    <ligand>
        <name>acetyl-CoA</name>
        <dbReference type="ChEBI" id="CHEBI:57288"/>
    </ligand>
</feature>
<accession>B2AGH8</accession>
<reference key="1">
    <citation type="journal article" date="2008" name="Genome Res.">
        <title>Genome sequence of the beta-rhizobium Cupriavidus taiwanensis and comparative genomics of rhizobia.</title>
        <authorList>
            <person name="Amadou C."/>
            <person name="Pascal G."/>
            <person name="Mangenot S."/>
            <person name="Glew M."/>
            <person name="Bontemps C."/>
            <person name="Capela D."/>
            <person name="Carrere S."/>
            <person name="Cruveiller S."/>
            <person name="Dossat C."/>
            <person name="Lajus A."/>
            <person name="Marchetti M."/>
            <person name="Poinsot V."/>
            <person name="Rouy Z."/>
            <person name="Servin B."/>
            <person name="Saad M."/>
            <person name="Schenowitz C."/>
            <person name="Barbe V."/>
            <person name="Batut J."/>
            <person name="Medigue C."/>
            <person name="Masson-Boivin C."/>
        </authorList>
    </citation>
    <scope>NUCLEOTIDE SEQUENCE [LARGE SCALE GENOMIC DNA]</scope>
    <source>
        <strain>DSM 17343 / BCRC 17206 / CCUG 44338 / CIP 107171 / LMG 19424 / R1</strain>
    </source>
</reference>
<evidence type="ECO:0000255" key="1">
    <source>
        <dbReference type="HAMAP-Rule" id="MF_01631"/>
    </source>
</evidence>
<gene>
    <name evidence="1" type="primary">glmU</name>
    <name type="ordered locus">RALTA_A0204</name>
</gene>
<organism>
    <name type="scientific">Cupriavidus taiwanensis (strain DSM 17343 / BCRC 17206 / CCUG 44338 / CIP 107171 / LMG 19424 / R1)</name>
    <name type="common">Ralstonia taiwanensis (strain LMG 19424)</name>
    <dbReference type="NCBI Taxonomy" id="977880"/>
    <lineage>
        <taxon>Bacteria</taxon>
        <taxon>Pseudomonadati</taxon>
        <taxon>Pseudomonadota</taxon>
        <taxon>Betaproteobacteria</taxon>
        <taxon>Burkholderiales</taxon>
        <taxon>Burkholderiaceae</taxon>
        <taxon>Cupriavidus</taxon>
    </lineage>
</organism>
<proteinExistence type="inferred from homology"/>
<name>GLMU_CUPTR</name>
<protein>
    <recommendedName>
        <fullName evidence="1">Bifunctional protein GlmU</fullName>
    </recommendedName>
    <domain>
        <recommendedName>
            <fullName evidence="1">UDP-N-acetylglucosamine pyrophosphorylase</fullName>
            <ecNumber evidence="1">2.7.7.23</ecNumber>
        </recommendedName>
        <alternativeName>
            <fullName evidence="1">N-acetylglucosamine-1-phosphate uridyltransferase</fullName>
        </alternativeName>
    </domain>
    <domain>
        <recommendedName>
            <fullName evidence="1">Glucosamine-1-phosphate N-acetyltransferase</fullName>
            <ecNumber evidence="1">2.3.1.157</ecNumber>
        </recommendedName>
    </domain>
</protein>